<name>FLIW_SULDN</name>
<proteinExistence type="inferred from homology"/>
<dbReference type="EMBL" id="CP000153">
    <property type="protein sequence ID" value="ABB43693.1"/>
    <property type="molecule type" value="Genomic_DNA"/>
</dbReference>
<dbReference type="RefSeq" id="WP_011372047.1">
    <property type="nucleotide sequence ID" value="NC_007575.1"/>
</dbReference>
<dbReference type="SMR" id="Q30TI8"/>
<dbReference type="STRING" id="326298.Suden_0412"/>
<dbReference type="KEGG" id="tdn:Suden_0412"/>
<dbReference type="eggNOG" id="COG1699">
    <property type="taxonomic scope" value="Bacteria"/>
</dbReference>
<dbReference type="HOGENOM" id="CLU_112356_2_0_7"/>
<dbReference type="OrthoDB" id="5372942at2"/>
<dbReference type="Proteomes" id="UP000002714">
    <property type="component" value="Chromosome"/>
</dbReference>
<dbReference type="GO" id="GO:0005737">
    <property type="term" value="C:cytoplasm"/>
    <property type="evidence" value="ECO:0007669"/>
    <property type="project" value="UniProtKB-SubCell"/>
</dbReference>
<dbReference type="GO" id="GO:0044780">
    <property type="term" value="P:bacterial-type flagellum assembly"/>
    <property type="evidence" value="ECO:0007669"/>
    <property type="project" value="UniProtKB-UniRule"/>
</dbReference>
<dbReference type="GO" id="GO:0006417">
    <property type="term" value="P:regulation of translation"/>
    <property type="evidence" value="ECO:0007669"/>
    <property type="project" value="UniProtKB-KW"/>
</dbReference>
<dbReference type="Gene3D" id="2.30.290.10">
    <property type="entry name" value="BH3618-like"/>
    <property type="match status" value="1"/>
</dbReference>
<dbReference type="HAMAP" id="MF_01185">
    <property type="entry name" value="FliW"/>
    <property type="match status" value="1"/>
</dbReference>
<dbReference type="InterPro" id="IPR003775">
    <property type="entry name" value="Flagellar_assembly_factor_FliW"/>
</dbReference>
<dbReference type="InterPro" id="IPR024046">
    <property type="entry name" value="Flagellar_assmbl_FliW_dom_sf"/>
</dbReference>
<dbReference type="NCBIfam" id="NF009790">
    <property type="entry name" value="PRK13282.1"/>
    <property type="match status" value="1"/>
</dbReference>
<dbReference type="PANTHER" id="PTHR39190">
    <property type="entry name" value="FLAGELLAR ASSEMBLY FACTOR FLIW"/>
    <property type="match status" value="1"/>
</dbReference>
<dbReference type="PANTHER" id="PTHR39190:SF1">
    <property type="entry name" value="FLAGELLAR ASSEMBLY FACTOR FLIW"/>
    <property type="match status" value="1"/>
</dbReference>
<dbReference type="Pfam" id="PF02623">
    <property type="entry name" value="FliW"/>
    <property type="match status" value="1"/>
</dbReference>
<dbReference type="SUPFAM" id="SSF141457">
    <property type="entry name" value="BH3618-like"/>
    <property type="match status" value="1"/>
</dbReference>
<organism>
    <name type="scientific">Sulfurimonas denitrificans (strain ATCC 33889 / DSM 1251)</name>
    <name type="common">Thiomicrospira denitrificans (strain ATCC 33889 / DSM 1251)</name>
    <dbReference type="NCBI Taxonomy" id="326298"/>
    <lineage>
        <taxon>Bacteria</taxon>
        <taxon>Pseudomonadati</taxon>
        <taxon>Campylobacterota</taxon>
        <taxon>Epsilonproteobacteria</taxon>
        <taxon>Campylobacterales</taxon>
        <taxon>Sulfurimonadaceae</taxon>
        <taxon>Sulfurimonas</taxon>
    </lineage>
</organism>
<comment type="function">
    <text evidence="1">Acts as an anti-CsrA protein, binds CsrA and prevents it from repressing translation of its target genes, one of which is flagellin. Binds to flagellin and participates in the assembly of the flagellum.</text>
</comment>
<comment type="subunit">
    <text evidence="1">Interacts with translational regulator CsrA and flagellin(s).</text>
</comment>
<comment type="subcellular location">
    <subcellularLocation>
        <location evidence="1">Cytoplasm</location>
    </subcellularLocation>
</comment>
<comment type="similarity">
    <text evidence="1">Belongs to the FliW family.</text>
</comment>
<gene>
    <name evidence="1" type="primary">fliW</name>
    <name type="ordered locus">Suden_0412</name>
</gene>
<keyword id="KW-1005">Bacterial flagellum biogenesis</keyword>
<keyword id="KW-0143">Chaperone</keyword>
<keyword id="KW-0963">Cytoplasm</keyword>
<keyword id="KW-1185">Reference proteome</keyword>
<keyword id="KW-0810">Translation regulation</keyword>
<protein>
    <recommendedName>
        <fullName evidence="1">Flagellar assembly factor FliW</fullName>
    </recommendedName>
</protein>
<accession>Q30TI8</accession>
<feature type="chain" id="PRO_0000273012" description="Flagellar assembly factor FliW">
    <location>
        <begin position="1"/>
        <end position="126"/>
    </location>
</feature>
<reference key="1">
    <citation type="journal article" date="2008" name="Appl. Environ. Microbiol.">
        <title>Genome of the epsilonproteobacterial chemolithoautotroph Sulfurimonas denitrificans.</title>
        <authorList>
            <person name="Sievert S.M."/>
            <person name="Scott K.M."/>
            <person name="Klotz M.G."/>
            <person name="Chain P.S.G."/>
            <person name="Hauser L.J."/>
            <person name="Hemp J."/>
            <person name="Huegler M."/>
            <person name="Land M."/>
            <person name="Lapidus A."/>
            <person name="Larimer F.W."/>
            <person name="Lucas S."/>
            <person name="Malfatti S.A."/>
            <person name="Meyer F."/>
            <person name="Paulsen I.T."/>
            <person name="Ren Q."/>
            <person name="Simon J."/>
            <person name="Bailey K."/>
            <person name="Diaz E."/>
            <person name="Fitzpatrick K.A."/>
            <person name="Glover B."/>
            <person name="Gwatney N."/>
            <person name="Korajkic A."/>
            <person name="Long A."/>
            <person name="Mobberley J.M."/>
            <person name="Pantry S.N."/>
            <person name="Pazder G."/>
            <person name="Peterson S."/>
            <person name="Quintanilla J.D."/>
            <person name="Sprinkle R."/>
            <person name="Stephens J."/>
            <person name="Thomas P."/>
            <person name="Vaughn R."/>
            <person name="Weber M.J."/>
            <person name="Wooten L.L."/>
        </authorList>
    </citation>
    <scope>NUCLEOTIDE SEQUENCE [LARGE SCALE GENOMIC DNA]</scope>
    <source>
        <strain>ATCC 33889 / DSM 1251</strain>
    </source>
</reference>
<sequence length="126" mass="14347">MKFDVCVPILGFENVKEVTLEKIDDAFMRMESSNDEHISFTLINPFALREYDFEIPDATQKLLEIDEKSNILILNIAIIQTPVEDTVVNFIGPMIFNTDNNKAAQLVLSESTKYGVAEKISLYLKK</sequence>
<evidence type="ECO:0000255" key="1">
    <source>
        <dbReference type="HAMAP-Rule" id="MF_01185"/>
    </source>
</evidence>